<reference key="1">
    <citation type="journal article" date="2004" name="Nature">
        <title>Genome evolution in yeasts.</title>
        <authorList>
            <person name="Dujon B."/>
            <person name="Sherman D."/>
            <person name="Fischer G."/>
            <person name="Durrens P."/>
            <person name="Casaregola S."/>
            <person name="Lafontaine I."/>
            <person name="de Montigny J."/>
            <person name="Marck C."/>
            <person name="Neuveglise C."/>
            <person name="Talla E."/>
            <person name="Goffard N."/>
            <person name="Frangeul L."/>
            <person name="Aigle M."/>
            <person name="Anthouard V."/>
            <person name="Babour A."/>
            <person name="Barbe V."/>
            <person name="Barnay S."/>
            <person name="Blanchin S."/>
            <person name="Beckerich J.-M."/>
            <person name="Beyne E."/>
            <person name="Bleykasten C."/>
            <person name="Boisrame A."/>
            <person name="Boyer J."/>
            <person name="Cattolico L."/>
            <person name="Confanioleri F."/>
            <person name="de Daruvar A."/>
            <person name="Despons L."/>
            <person name="Fabre E."/>
            <person name="Fairhead C."/>
            <person name="Ferry-Dumazet H."/>
            <person name="Groppi A."/>
            <person name="Hantraye F."/>
            <person name="Hennequin C."/>
            <person name="Jauniaux N."/>
            <person name="Joyet P."/>
            <person name="Kachouri R."/>
            <person name="Kerrest A."/>
            <person name="Koszul R."/>
            <person name="Lemaire M."/>
            <person name="Lesur I."/>
            <person name="Ma L."/>
            <person name="Muller H."/>
            <person name="Nicaud J.-M."/>
            <person name="Nikolski M."/>
            <person name="Oztas S."/>
            <person name="Ozier-Kalogeropoulos O."/>
            <person name="Pellenz S."/>
            <person name="Potier S."/>
            <person name="Richard G.-F."/>
            <person name="Straub M.-L."/>
            <person name="Suleau A."/>
            <person name="Swennen D."/>
            <person name="Tekaia F."/>
            <person name="Wesolowski-Louvel M."/>
            <person name="Westhof E."/>
            <person name="Wirth B."/>
            <person name="Zeniou-Meyer M."/>
            <person name="Zivanovic Y."/>
            <person name="Bolotin-Fukuhara M."/>
            <person name="Thierry A."/>
            <person name="Bouchier C."/>
            <person name="Caudron B."/>
            <person name="Scarpelli C."/>
            <person name="Gaillardin C."/>
            <person name="Weissenbach J."/>
            <person name="Wincker P."/>
            <person name="Souciet J.-L."/>
        </authorList>
    </citation>
    <scope>NUCLEOTIDE SEQUENCE [LARGE SCALE GENOMIC DNA]</scope>
    <source>
        <strain>ATCC 2001 / BCRC 20586 / JCM 3761 / NBRC 0622 / NRRL Y-65 / CBS 138</strain>
    </source>
</reference>
<comment type="function">
    <text evidence="1">Component of the NuA4 histone acetyltransferase complex which is involved in transcriptional activation of selected genes principally by acetylation of nucleosomal histone H4 and H2A. The NuA4 complex is also involved in DNA repair. Involved in gene silencing by neighboring heterochromatin, blockage of the silencing spreading along the chromosome, and required for cell cycle progression through G2/M (By similarity).</text>
</comment>
<comment type="subunit">
    <text evidence="1">Component of the NuA4 histone acetyltransferase complex.</text>
</comment>
<comment type="subcellular location">
    <subcellularLocation>
        <location evidence="1">Nucleus</location>
    </subcellularLocation>
</comment>
<comment type="similarity">
    <text evidence="3">Belongs to the enhancer of polycomb family.</text>
</comment>
<organism>
    <name type="scientific">Candida glabrata (strain ATCC 2001 / BCRC 20586 / JCM 3761 / NBRC 0622 / NRRL Y-65 / CBS 138)</name>
    <name type="common">Yeast</name>
    <name type="synonym">Nakaseomyces glabratus</name>
    <dbReference type="NCBI Taxonomy" id="284593"/>
    <lineage>
        <taxon>Eukaryota</taxon>
        <taxon>Fungi</taxon>
        <taxon>Dikarya</taxon>
        <taxon>Ascomycota</taxon>
        <taxon>Saccharomycotina</taxon>
        <taxon>Saccharomycetes</taxon>
        <taxon>Saccharomycetales</taxon>
        <taxon>Saccharomycetaceae</taxon>
        <taxon>Nakaseomyces</taxon>
    </lineage>
</organism>
<dbReference type="EMBL" id="CR380957">
    <property type="protein sequence ID" value="CAG61717.1"/>
    <property type="molecule type" value="Genomic_DNA"/>
</dbReference>
<dbReference type="RefSeq" id="XP_448754.1">
    <property type="nucleotide sequence ID" value="XM_448754.1"/>
</dbReference>
<dbReference type="SMR" id="Q6FLZ0"/>
<dbReference type="FunCoup" id="Q6FLZ0">
    <property type="interactions" value="301"/>
</dbReference>
<dbReference type="STRING" id="284593.Q6FLZ0"/>
<dbReference type="EnsemblFungi" id="CAGL0K12386g-T">
    <property type="protein sequence ID" value="CAGL0K12386g-T-p1"/>
    <property type="gene ID" value="CAGL0K12386g"/>
</dbReference>
<dbReference type="KEGG" id="cgr:2889983"/>
<dbReference type="CGD" id="CAL0134065">
    <property type="gene designation" value="CAGL0K12386g"/>
</dbReference>
<dbReference type="VEuPathDB" id="FungiDB:CAGL0K12386g"/>
<dbReference type="eggNOG" id="KOG2261">
    <property type="taxonomic scope" value="Eukaryota"/>
</dbReference>
<dbReference type="HOGENOM" id="CLU_010580_0_0_1"/>
<dbReference type="InParanoid" id="Q6FLZ0"/>
<dbReference type="OMA" id="MLGTKSY"/>
<dbReference type="Proteomes" id="UP000002428">
    <property type="component" value="Chromosome K"/>
</dbReference>
<dbReference type="GO" id="GO:0035267">
    <property type="term" value="C:NuA4 histone acetyltransferase complex"/>
    <property type="evidence" value="ECO:0007669"/>
    <property type="project" value="EnsemblFungi"/>
</dbReference>
<dbReference type="GO" id="GO:0000786">
    <property type="term" value="C:nucleosome"/>
    <property type="evidence" value="ECO:0007669"/>
    <property type="project" value="EnsemblFungi"/>
</dbReference>
<dbReference type="GO" id="GO:0005634">
    <property type="term" value="C:nucleus"/>
    <property type="evidence" value="ECO:0007669"/>
    <property type="project" value="UniProtKB-SubCell"/>
</dbReference>
<dbReference type="GO" id="GO:0032777">
    <property type="term" value="C:piccolo histone acetyltransferase complex"/>
    <property type="evidence" value="ECO:0007669"/>
    <property type="project" value="EnsemblFungi"/>
</dbReference>
<dbReference type="GO" id="GO:0004402">
    <property type="term" value="F:histone acetyltransferase activity"/>
    <property type="evidence" value="ECO:0007669"/>
    <property type="project" value="EnsemblFungi"/>
</dbReference>
<dbReference type="GO" id="GO:0006281">
    <property type="term" value="P:DNA repair"/>
    <property type="evidence" value="ECO:0007669"/>
    <property type="project" value="UniProtKB-KW"/>
</dbReference>
<dbReference type="GO" id="GO:0016239">
    <property type="term" value="P:positive regulation of macroautophagy"/>
    <property type="evidence" value="ECO:0007669"/>
    <property type="project" value="EnsemblFungi"/>
</dbReference>
<dbReference type="GO" id="GO:0006357">
    <property type="term" value="P:regulation of transcription by RNA polymerase II"/>
    <property type="evidence" value="ECO:0007669"/>
    <property type="project" value="EnsemblFungi"/>
</dbReference>
<dbReference type="InterPro" id="IPR024943">
    <property type="entry name" value="Enhancer_polycomb"/>
</dbReference>
<dbReference type="InterPro" id="IPR019542">
    <property type="entry name" value="Enhancer_polycomb-like_N"/>
</dbReference>
<dbReference type="PANTHER" id="PTHR14898">
    <property type="entry name" value="ENHANCER OF POLYCOMB"/>
    <property type="match status" value="1"/>
</dbReference>
<dbReference type="Pfam" id="PF10513">
    <property type="entry name" value="EPL1"/>
    <property type="match status" value="1"/>
</dbReference>
<accession>Q6FLZ0</accession>
<keyword id="KW-0131">Cell cycle</keyword>
<keyword id="KW-0227">DNA damage</keyword>
<keyword id="KW-0234">DNA repair</keyword>
<keyword id="KW-0539">Nucleus</keyword>
<keyword id="KW-1185">Reference proteome</keyword>
<keyword id="KW-0804">Transcription</keyword>
<keyword id="KW-0805">Transcription regulation</keyword>
<sequence length="821" mass="94601">MSSNGGSNTNERSVGPDSGSLRSNSNLSSVNGDGSDSGSTRFRHRKISVKQRLRIHLPSDLKNLDKNEIQKRELLDVETGVEKNEEKEVHLHRILQKASVLEHLNSKKDYIPTPDASKTWSDYDKFYSGKFVETQAYVKFSVTVEDCCGVPYTLDEIDDDFLENSLNKNSDLKLNEDEFESLCSAFETAIKERQPFLQMDPETILTFDEVKPTLLKVDFNNMHLRSQLAQEVAAIHNPQTANSSSDGNGPFTTVFDSSTTANVRPIPELIEKYGKEVYEHWSRRKIEAKGAEIFPQLKFERPGEKEEVDPYVCFRRRELRHPRKTRRVDILNSQKLRILLKELRHAKDMSLLVAQREQINLQLIEDDLKILNKRKHVISIKRKLDIKGEDEDLINHKRKRPTIMTIEKKRQQEEALAAAKRAAEQEKAAAAAKAAEAKNKSKAQKKQNEQAAKVKSSKQKNSSSQDLTKKVTQEESQSEEQQPAMSHVYVKLPSSKIPDIVLEDVEKLLQNKEKSARRFVQERMARRKLEDNDEFINLTDDPHNPVFDLTTLNCSEVPFSPFSSIASSKLKINKSFYLRDLNDYLNGIATDLKVFNKDGEKIEDNKTASGNQNVRKTEVYNPFDSGSELHSREYPVKFRRRFGRGNIEYLDVKRKIDNFSDTRFCEFIDFKAIENQELENNGRNLDVYESRADEFSRLLEKWKFDSTNNEYGLRFSDEPARLNQISNDTQVIRFGTMLGTKSYEQLKEATIRYRKDYISRIRQQKLNAQKQQQILQQQQFLQQQQENGSPNNATMPINPINKSTLKQDVASNVLVGTQQKS</sequence>
<proteinExistence type="inferred from homology"/>
<protein>
    <recommendedName>
        <fullName>Enhancer of polycomb-like protein 1</fullName>
    </recommendedName>
</protein>
<name>EPL1_CANGA</name>
<gene>
    <name type="primary">EPL1</name>
    <name type="ordered locus">CAGL0K12386g</name>
</gene>
<evidence type="ECO:0000250" key="1"/>
<evidence type="ECO:0000256" key="2">
    <source>
        <dbReference type="SAM" id="MobiDB-lite"/>
    </source>
</evidence>
<evidence type="ECO:0000305" key="3"/>
<feature type="chain" id="PRO_0000214158" description="Enhancer of polycomb-like protein 1">
    <location>
        <begin position="1"/>
        <end position="821"/>
    </location>
</feature>
<feature type="region of interest" description="Disordered" evidence="2">
    <location>
        <begin position="1"/>
        <end position="43"/>
    </location>
</feature>
<feature type="region of interest" description="Disordered" evidence="2">
    <location>
        <begin position="427"/>
        <end position="485"/>
    </location>
</feature>
<feature type="region of interest" description="Disordered" evidence="2">
    <location>
        <begin position="779"/>
        <end position="799"/>
    </location>
</feature>
<feature type="compositionally biased region" description="Polar residues" evidence="2">
    <location>
        <begin position="1"/>
        <end position="12"/>
    </location>
</feature>
<feature type="compositionally biased region" description="Low complexity" evidence="2">
    <location>
        <begin position="18"/>
        <end position="39"/>
    </location>
</feature>
<feature type="compositionally biased region" description="Low complexity" evidence="2">
    <location>
        <begin position="449"/>
        <end position="465"/>
    </location>
</feature>
<feature type="compositionally biased region" description="Polar residues" evidence="2">
    <location>
        <begin position="786"/>
        <end position="799"/>
    </location>
</feature>